<name>Y381_MYCGE</name>
<accession>P47621</accession>
<feature type="chain" id="PRO_0000210582" description="Uncharacterized protein MG381">
    <location>
        <begin position="1"/>
        <end position="218"/>
    </location>
</feature>
<reference key="1">
    <citation type="journal article" date="1995" name="Science">
        <title>The minimal gene complement of Mycoplasma genitalium.</title>
        <authorList>
            <person name="Fraser C.M."/>
            <person name="Gocayne J.D."/>
            <person name="White O."/>
            <person name="Adams M.D."/>
            <person name="Clayton R.A."/>
            <person name="Fleischmann R.D."/>
            <person name="Bult C.J."/>
            <person name="Kerlavage A.R."/>
            <person name="Sutton G.G."/>
            <person name="Kelley J.M."/>
            <person name="Fritchman J.L."/>
            <person name="Weidman J.F."/>
            <person name="Small K.V."/>
            <person name="Sandusky M."/>
            <person name="Fuhrmann J.L."/>
            <person name="Nguyen D.T."/>
            <person name="Utterback T.R."/>
            <person name="Saudek D.M."/>
            <person name="Phillips C.A."/>
            <person name="Merrick J.M."/>
            <person name="Tomb J.-F."/>
            <person name="Dougherty B.A."/>
            <person name="Bott K.F."/>
            <person name="Hu P.-C."/>
            <person name="Lucier T.S."/>
            <person name="Peterson S.N."/>
            <person name="Smith H.O."/>
            <person name="Hutchison C.A. III"/>
            <person name="Venter J.C."/>
        </authorList>
    </citation>
    <scope>NUCLEOTIDE SEQUENCE [LARGE SCALE GENOMIC DNA]</scope>
    <source>
        <strain>ATCC 33530 / DSM 19775 / NCTC 10195 / G37</strain>
    </source>
</reference>
<organism>
    <name type="scientific">Mycoplasma genitalium (strain ATCC 33530 / DSM 19775 / NCTC 10195 / G37)</name>
    <name type="common">Mycoplasmoides genitalium</name>
    <dbReference type="NCBI Taxonomy" id="243273"/>
    <lineage>
        <taxon>Bacteria</taxon>
        <taxon>Bacillati</taxon>
        <taxon>Mycoplasmatota</taxon>
        <taxon>Mycoplasmoidales</taxon>
        <taxon>Mycoplasmoidaceae</taxon>
        <taxon>Mycoplasmoides</taxon>
    </lineage>
</organism>
<gene>
    <name type="ordered locus">MG381</name>
</gene>
<protein>
    <recommendedName>
        <fullName>Uncharacterized protein MG381</fullName>
    </recommendedName>
</protein>
<sequence>MIKLGWASFSNTEFAQDIFIKFANQFYKQDDAGTILFELKKTLGVNQLDEIEKNKKVIIVNQFQNSLGKFLLFNKENTKRINSLANEHISSFLKKIFRLSGFKDMLIDVQHHKKLQKCLLREIHLLVCLINSNQFSDELMQIIEWYQYLKKHSSKLFVITASSDKKPVIEPTINEYKAIFGEYLSSFHLDLKNNQSNDLFQKLLDQIKIKATSKTSLR</sequence>
<proteinExistence type="predicted"/>
<dbReference type="EMBL" id="L43967">
    <property type="protein sequence ID" value="AAC71608.1"/>
    <property type="molecule type" value="Genomic_DNA"/>
</dbReference>
<dbReference type="PIR" id="B64242">
    <property type="entry name" value="B64242"/>
</dbReference>
<dbReference type="RefSeq" id="WP_010869459.1">
    <property type="nucleotide sequence ID" value="NC_000908.2"/>
</dbReference>
<dbReference type="STRING" id="243273.MG_381"/>
<dbReference type="GeneID" id="88282564"/>
<dbReference type="KEGG" id="mge:MG_381"/>
<dbReference type="HOGENOM" id="CLU_1265785_0_0_14"/>
<dbReference type="InParanoid" id="P47621"/>
<dbReference type="OrthoDB" id="9939799at2"/>
<dbReference type="BioCyc" id="MGEN243273:G1GJ2-475-MONOMER"/>
<dbReference type="Proteomes" id="UP000000807">
    <property type="component" value="Chromosome"/>
</dbReference>
<keyword id="KW-1185">Reference proteome</keyword>